<name>NLTP3_ORYSI</name>
<comment type="function">
    <text evidence="3">Plant non-specific lipid-transfer proteins transfer phospholipids as well as galactolipids across membranes. May play a role in wax or cutin deposition in the cell walls of expanding epidermal cells and certain secretory tissues. May possess an antifungal activity and protect the plant against pathogens.</text>
</comment>
<comment type="similarity">
    <text evidence="4">Belongs to the plant LTP family.</text>
</comment>
<evidence type="ECO:0000250" key="1"/>
<evidence type="ECO:0000255" key="2"/>
<evidence type="ECO:0000269" key="3">
    <source>
    </source>
</evidence>
<evidence type="ECO:0000305" key="4"/>
<proteinExistence type="evidence at transcript level"/>
<keyword id="KW-1015">Disulfide bond</keyword>
<keyword id="KW-0446">Lipid-binding</keyword>
<keyword id="KW-0611">Plant defense</keyword>
<keyword id="KW-1185">Reference proteome</keyword>
<keyword id="KW-0732">Signal</keyword>
<keyword id="KW-0813">Transport</keyword>
<organism>
    <name type="scientific">Oryza sativa subsp. indica</name>
    <name type="common">Rice</name>
    <dbReference type="NCBI Taxonomy" id="39946"/>
    <lineage>
        <taxon>Eukaryota</taxon>
        <taxon>Viridiplantae</taxon>
        <taxon>Streptophyta</taxon>
        <taxon>Embryophyta</taxon>
        <taxon>Tracheophyta</taxon>
        <taxon>Spermatophyta</taxon>
        <taxon>Magnoliopsida</taxon>
        <taxon>Liliopsida</taxon>
        <taxon>Poales</taxon>
        <taxon>Poaceae</taxon>
        <taxon>BOP clade</taxon>
        <taxon>Oryzoideae</taxon>
        <taxon>Oryzeae</taxon>
        <taxon>Oryzinae</taxon>
        <taxon>Oryza</taxon>
        <taxon>Oryza sativa</taxon>
    </lineage>
</organism>
<dbReference type="EMBL" id="AF114829">
    <property type="protein sequence ID" value="AAN76490.1"/>
    <property type="molecule type" value="Genomic_DNA"/>
</dbReference>
<dbReference type="EMBL" id="CM000136">
    <property type="protein sequence ID" value="EAY79713.1"/>
    <property type="molecule type" value="Genomic_DNA"/>
</dbReference>
<dbReference type="EMBL" id="CM000137">
    <property type="protein sequence ID" value="EAY82033.1"/>
    <property type="molecule type" value="Genomic_DNA"/>
</dbReference>
<dbReference type="EMBL" id="U29176">
    <property type="protein sequence ID" value="AAA70046.1"/>
    <property type="molecule type" value="mRNA"/>
</dbReference>
<dbReference type="PIR" id="T03297">
    <property type="entry name" value="T03297"/>
</dbReference>
<dbReference type="SMR" id="A2ZAS9"/>
<dbReference type="STRING" id="39946.A2ZAS9"/>
<dbReference type="Allergome" id="2788">
    <property type="allergen name" value="Ory s 14"/>
</dbReference>
<dbReference type="EnsemblPlants" id="BGIOSGA034680-TA">
    <property type="protein sequence ID" value="BGIOSGA034680-PA"/>
    <property type="gene ID" value="BGIOSGA034680"/>
</dbReference>
<dbReference type="EnsemblPlants" id="BGIOSGA036880-TA">
    <property type="protein sequence ID" value="BGIOSGA036880-PA"/>
    <property type="gene ID" value="BGIOSGA036880"/>
</dbReference>
<dbReference type="EnsemblPlants" id="OsGoSa_11g0001070.01">
    <property type="protein sequence ID" value="OsGoSa_11g0001070.01"/>
    <property type="gene ID" value="OsGoSa_11g0001070"/>
</dbReference>
<dbReference type="EnsemblPlants" id="OsIR64_11g0001070.01">
    <property type="protein sequence ID" value="OsIR64_11g0001070.01"/>
    <property type="gene ID" value="OsIR64_11g0001070"/>
</dbReference>
<dbReference type="EnsemblPlants" id="OsKYG_11g0001070.01">
    <property type="protein sequence ID" value="OsKYG_11g0001070.01"/>
    <property type="gene ID" value="OsKYG_11g0001070"/>
</dbReference>
<dbReference type="EnsemblPlants" id="OsLaMu_11g0001100.01">
    <property type="protein sequence ID" value="OsLaMu_11g0001100.01"/>
    <property type="gene ID" value="OsLaMu_11g0001100"/>
</dbReference>
<dbReference type="EnsemblPlants" id="OsLaMu_12g0001070.01">
    <property type="protein sequence ID" value="OsLaMu_12g0001070.01"/>
    <property type="gene ID" value="OsLaMu_12g0001070"/>
</dbReference>
<dbReference type="EnsemblPlants" id="OsLima_11g0000950.01">
    <property type="protein sequence ID" value="OsLima_11g0000950.01"/>
    <property type="gene ID" value="OsLima_11g0000950"/>
</dbReference>
<dbReference type="EnsemblPlants" id="OsLiXu_11g0001070.01">
    <property type="protein sequence ID" value="OsLiXu_11g0001070.01"/>
    <property type="gene ID" value="OsLiXu_11g0001070"/>
</dbReference>
<dbReference type="EnsemblPlants" id="OsMH63_11G001040_01">
    <property type="protein sequence ID" value="OsMH63_11G001040_01"/>
    <property type="gene ID" value="OsMH63_11G001040"/>
</dbReference>
<dbReference type="EnsemblPlants" id="OsMH63_12G001470_01">
    <property type="protein sequence ID" value="OsMH63_12G001470_01"/>
    <property type="gene ID" value="OsMH63_12G001470"/>
</dbReference>
<dbReference type="EnsemblPlants" id="OsPr106_11g0001070.01">
    <property type="protein sequence ID" value="OsPr106_11g0001070.01"/>
    <property type="gene ID" value="OsPr106_11g0001070"/>
</dbReference>
<dbReference type="EnsemblPlants" id="OsZS97_11G001080_01">
    <property type="protein sequence ID" value="OsZS97_11G001080_01"/>
    <property type="gene ID" value="OsZS97_11G001080"/>
</dbReference>
<dbReference type="EnsemblPlants" id="OsZS97_12G001050_03">
    <property type="protein sequence ID" value="OsZS97_12G001050_03"/>
    <property type="gene ID" value="OsZS97_12G001050"/>
</dbReference>
<dbReference type="Gramene" id="BGIOSGA034680-TA">
    <property type="protein sequence ID" value="BGIOSGA034680-PA"/>
    <property type="gene ID" value="BGIOSGA034680"/>
</dbReference>
<dbReference type="Gramene" id="BGIOSGA036880-TA">
    <property type="protein sequence ID" value="BGIOSGA036880-PA"/>
    <property type="gene ID" value="BGIOSGA036880"/>
</dbReference>
<dbReference type="Gramene" id="OsGoSa_11g0001070.01">
    <property type="protein sequence ID" value="OsGoSa_11g0001070.01"/>
    <property type="gene ID" value="OsGoSa_11g0001070"/>
</dbReference>
<dbReference type="Gramene" id="OsIR64_11g0001070.01">
    <property type="protein sequence ID" value="OsIR64_11g0001070.01"/>
    <property type="gene ID" value="OsIR64_11g0001070"/>
</dbReference>
<dbReference type="Gramene" id="OsKYG_11g0001070.01">
    <property type="protein sequence ID" value="OsKYG_11g0001070.01"/>
    <property type="gene ID" value="OsKYG_11g0001070"/>
</dbReference>
<dbReference type="Gramene" id="OsLaMu_11g0001100.01">
    <property type="protein sequence ID" value="OsLaMu_11g0001100.01"/>
    <property type="gene ID" value="OsLaMu_11g0001100"/>
</dbReference>
<dbReference type="Gramene" id="OsLaMu_12g0001070.01">
    <property type="protein sequence ID" value="OsLaMu_12g0001070.01"/>
    <property type="gene ID" value="OsLaMu_12g0001070"/>
</dbReference>
<dbReference type="Gramene" id="OsLima_11g0000950.01">
    <property type="protein sequence ID" value="OsLima_11g0000950.01"/>
    <property type="gene ID" value="OsLima_11g0000950"/>
</dbReference>
<dbReference type="Gramene" id="OsLiXu_11g0001070.01">
    <property type="protein sequence ID" value="OsLiXu_11g0001070.01"/>
    <property type="gene ID" value="OsLiXu_11g0001070"/>
</dbReference>
<dbReference type="Gramene" id="OsMH63_11G001040_01">
    <property type="protein sequence ID" value="OsMH63_11G001040_01"/>
    <property type="gene ID" value="OsMH63_11G001040"/>
</dbReference>
<dbReference type="Gramene" id="OsMH63_12G001470_01">
    <property type="protein sequence ID" value="OsMH63_12G001470_01"/>
    <property type="gene ID" value="OsMH63_12G001470"/>
</dbReference>
<dbReference type="Gramene" id="OsPr106_11g0001070.01">
    <property type="protein sequence ID" value="OsPr106_11g0001070.01"/>
    <property type="gene ID" value="OsPr106_11g0001070"/>
</dbReference>
<dbReference type="Gramene" id="OsZS97_11G001080_01">
    <property type="protein sequence ID" value="OsZS97_11G001080_01"/>
    <property type="gene ID" value="OsZS97_11G001080"/>
</dbReference>
<dbReference type="Gramene" id="OsZS97_12G001050_03">
    <property type="protein sequence ID" value="OsZS97_12G001050_03"/>
    <property type="gene ID" value="OsZS97_12G001050"/>
</dbReference>
<dbReference type="HOGENOM" id="CLU_128423_0_0_1"/>
<dbReference type="OMA" id="CACLKSM"/>
<dbReference type="OrthoDB" id="1890443at2759"/>
<dbReference type="Proteomes" id="UP000007015">
    <property type="component" value="Chromosome 11"/>
</dbReference>
<dbReference type="Proteomes" id="UP000007015">
    <property type="component" value="Chromosome 12"/>
</dbReference>
<dbReference type="GO" id="GO:0008289">
    <property type="term" value="F:lipid binding"/>
    <property type="evidence" value="ECO:0007669"/>
    <property type="project" value="UniProtKB-KW"/>
</dbReference>
<dbReference type="GO" id="GO:0006952">
    <property type="term" value="P:defense response"/>
    <property type="evidence" value="ECO:0007669"/>
    <property type="project" value="UniProtKB-KW"/>
</dbReference>
<dbReference type="GO" id="GO:0006869">
    <property type="term" value="P:lipid transport"/>
    <property type="evidence" value="ECO:0007669"/>
    <property type="project" value="InterPro"/>
</dbReference>
<dbReference type="CDD" id="cd01960">
    <property type="entry name" value="nsLTP1"/>
    <property type="match status" value="1"/>
</dbReference>
<dbReference type="Gene3D" id="1.10.110.10">
    <property type="entry name" value="Plant lipid-transfer and hydrophobic proteins"/>
    <property type="match status" value="1"/>
</dbReference>
<dbReference type="InterPro" id="IPR036312">
    <property type="entry name" value="Bifun_inhib/LTP/seed_sf"/>
</dbReference>
<dbReference type="InterPro" id="IPR016140">
    <property type="entry name" value="Bifunc_inhib/LTP/seed_store"/>
</dbReference>
<dbReference type="InterPro" id="IPR000528">
    <property type="entry name" value="Plant_nsLTP"/>
</dbReference>
<dbReference type="PANTHER" id="PTHR33076">
    <property type="entry name" value="NON-SPECIFIC LIPID-TRANSFER PROTEIN 2-RELATED"/>
    <property type="match status" value="1"/>
</dbReference>
<dbReference type="Pfam" id="PF00234">
    <property type="entry name" value="Tryp_alpha_amyl"/>
    <property type="match status" value="1"/>
</dbReference>
<dbReference type="PRINTS" id="PR00382">
    <property type="entry name" value="LIPIDTRNSFER"/>
</dbReference>
<dbReference type="SMART" id="SM00499">
    <property type="entry name" value="AAI"/>
    <property type="match status" value="1"/>
</dbReference>
<dbReference type="SUPFAM" id="SSF47699">
    <property type="entry name" value="Bifunctional inhibitor/lipid-transfer protein/seed storage 2S albumin"/>
    <property type="match status" value="1"/>
</dbReference>
<dbReference type="PROSITE" id="PS00597">
    <property type="entry name" value="PLANT_LTP"/>
    <property type="match status" value="1"/>
</dbReference>
<feature type="signal peptide" evidence="2">
    <location>
        <begin position="1"/>
        <end position="28"/>
    </location>
</feature>
<feature type="chain" id="PRO_0000296253" description="Non-specific lipid-transfer protein 3">
    <location>
        <begin position="29"/>
        <end position="121"/>
    </location>
</feature>
<feature type="disulfide bond" evidence="1">
    <location>
        <begin position="32"/>
        <end position="80"/>
    </location>
</feature>
<feature type="disulfide bond" evidence="1">
    <location>
        <begin position="42"/>
        <end position="57"/>
    </location>
</feature>
<feature type="disulfide bond" evidence="1">
    <location>
        <begin position="58"/>
        <end position="103"/>
    </location>
</feature>
<feature type="disulfide bond" evidence="1">
    <location>
        <begin position="78"/>
        <end position="117"/>
    </location>
</feature>
<reference key="1">
    <citation type="journal article" date="1999" name="Acta Bot. Sin.">
        <title>Isolation and characterization of a lipid transfer protein gene from rice.</title>
        <authorList>
            <person name="Liu X.-F."/>
            <person name="Xu J.-Z."/>
            <person name="Hou Y.-Q."/>
            <person name="Zhan S.-X."/>
            <person name="Ge X."/>
            <person name="Cao K."/>
        </authorList>
    </citation>
    <scope>NUCLEOTIDE SEQUENCE [GENOMIC DNA]</scope>
    <source>
        <strain>cv. Guang-Lu-Ai No.4</strain>
    </source>
</reference>
<reference key="2">
    <citation type="journal article" date="2005" name="PLoS Biol.">
        <title>The genomes of Oryza sativa: a history of duplications.</title>
        <authorList>
            <person name="Yu J."/>
            <person name="Wang J."/>
            <person name="Lin W."/>
            <person name="Li S."/>
            <person name="Li H."/>
            <person name="Zhou J."/>
            <person name="Ni P."/>
            <person name="Dong W."/>
            <person name="Hu S."/>
            <person name="Zeng C."/>
            <person name="Zhang J."/>
            <person name="Zhang Y."/>
            <person name="Li R."/>
            <person name="Xu Z."/>
            <person name="Li S."/>
            <person name="Li X."/>
            <person name="Zheng H."/>
            <person name="Cong L."/>
            <person name="Lin L."/>
            <person name="Yin J."/>
            <person name="Geng J."/>
            <person name="Li G."/>
            <person name="Shi J."/>
            <person name="Liu J."/>
            <person name="Lv H."/>
            <person name="Li J."/>
            <person name="Wang J."/>
            <person name="Deng Y."/>
            <person name="Ran L."/>
            <person name="Shi X."/>
            <person name="Wang X."/>
            <person name="Wu Q."/>
            <person name="Li C."/>
            <person name="Ren X."/>
            <person name="Wang J."/>
            <person name="Wang X."/>
            <person name="Li D."/>
            <person name="Liu D."/>
            <person name="Zhang X."/>
            <person name="Ji Z."/>
            <person name="Zhao W."/>
            <person name="Sun Y."/>
            <person name="Zhang Z."/>
            <person name="Bao J."/>
            <person name="Han Y."/>
            <person name="Dong L."/>
            <person name="Ji J."/>
            <person name="Chen P."/>
            <person name="Wu S."/>
            <person name="Liu J."/>
            <person name="Xiao Y."/>
            <person name="Bu D."/>
            <person name="Tan J."/>
            <person name="Yang L."/>
            <person name="Ye C."/>
            <person name="Zhang J."/>
            <person name="Xu J."/>
            <person name="Zhou Y."/>
            <person name="Yu Y."/>
            <person name="Zhang B."/>
            <person name="Zhuang S."/>
            <person name="Wei H."/>
            <person name="Liu B."/>
            <person name="Lei M."/>
            <person name="Yu H."/>
            <person name="Li Y."/>
            <person name="Xu H."/>
            <person name="Wei S."/>
            <person name="He X."/>
            <person name="Fang L."/>
            <person name="Zhang Z."/>
            <person name="Zhang Y."/>
            <person name="Huang X."/>
            <person name="Su Z."/>
            <person name="Tong W."/>
            <person name="Li J."/>
            <person name="Tong Z."/>
            <person name="Li S."/>
            <person name="Ye J."/>
            <person name="Wang L."/>
            <person name="Fang L."/>
            <person name="Lei T."/>
            <person name="Chen C.-S."/>
            <person name="Chen H.-C."/>
            <person name="Xu Z."/>
            <person name="Li H."/>
            <person name="Huang H."/>
            <person name="Zhang F."/>
            <person name="Xu H."/>
            <person name="Li N."/>
            <person name="Zhao C."/>
            <person name="Li S."/>
            <person name="Dong L."/>
            <person name="Huang Y."/>
            <person name="Li L."/>
            <person name="Xi Y."/>
            <person name="Qi Q."/>
            <person name="Li W."/>
            <person name="Zhang B."/>
            <person name="Hu W."/>
            <person name="Zhang Y."/>
            <person name="Tian X."/>
            <person name="Jiao Y."/>
            <person name="Liang X."/>
            <person name="Jin J."/>
            <person name="Gao L."/>
            <person name="Zheng W."/>
            <person name="Hao B."/>
            <person name="Liu S.-M."/>
            <person name="Wang W."/>
            <person name="Yuan L."/>
            <person name="Cao M."/>
            <person name="McDermott J."/>
            <person name="Samudrala R."/>
            <person name="Wang J."/>
            <person name="Wong G.K.-S."/>
            <person name="Yang H."/>
        </authorList>
    </citation>
    <scope>NUCLEOTIDE SEQUENCE [LARGE SCALE GENOMIC DNA]</scope>
    <source>
        <strain>cv. 93-11</strain>
    </source>
</reference>
<reference key="3">
    <citation type="thesis" date="1995" institute="Fudan University" country="China">
        <title>Rice lipid transfer protein gene.</title>
        <authorList>
            <person name="Li G."/>
        </authorList>
    </citation>
    <scope>NUCLEOTIDE SEQUENCE [MRNA] OF 23-121</scope>
    <source>
        <strain>cv. Guang-Lu-Ai No.4</strain>
        <tissue>Shoot</tissue>
    </source>
</reference>
<reference key="4">
    <citation type="journal article" date="2003" name="J. Biochem. Mol. Biol.">
        <title>Resistance function of rice lipid transfer protein LTP110.</title>
        <authorList>
            <person name="Ge X."/>
            <person name="Chen J."/>
            <person name="Li N."/>
            <person name="Lin Y."/>
            <person name="Sun C."/>
            <person name="Cao K."/>
        </authorList>
    </citation>
    <scope>FUNCTION</scope>
</reference>
<accession>A2ZAS9</accession>
<accession>Q42976</accession>
<accession>Q8GZV1</accession>
<gene>
    <name type="primary">LTP110-A</name>
    <name type="ORF">OsI_033672</name>
</gene>
<gene>
    <name type="primary">LTP110-B</name>
    <name type="ORF">OsI_035992</name>
</gene>
<sequence>MAGARRTMALVALVAVVAAAVVAERASAAVSCGDVTSSIAPCLSYVMGRESSPSSSCCSGVRTLNGKASSSADRRTACSCLKNMASSFRNLNMGNAASIPSKCGVSVAFPISTSVDCSKIN</sequence>
<protein>
    <recommendedName>
        <fullName>Non-specific lipid-transfer protein 3</fullName>
        <shortName>LTP 3</shortName>
    </recommendedName>
</protein>